<organism>
    <name type="scientific">Acidovorax ebreus (strain TPSY)</name>
    <name type="common">Diaphorobacter sp. (strain TPSY)</name>
    <dbReference type="NCBI Taxonomy" id="535289"/>
    <lineage>
        <taxon>Bacteria</taxon>
        <taxon>Pseudomonadati</taxon>
        <taxon>Pseudomonadota</taxon>
        <taxon>Betaproteobacteria</taxon>
        <taxon>Burkholderiales</taxon>
        <taxon>Comamonadaceae</taxon>
        <taxon>Diaphorobacter</taxon>
    </lineage>
</organism>
<reference key="1">
    <citation type="submission" date="2009-01" db="EMBL/GenBank/DDBJ databases">
        <title>Complete sequence of Diaphorobacter sp. TPSY.</title>
        <authorList>
            <consortium name="US DOE Joint Genome Institute"/>
            <person name="Lucas S."/>
            <person name="Copeland A."/>
            <person name="Lapidus A."/>
            <person name="Glavina del Rio T."/>
            <person name="Tice H."/>
            <person name="Bruce D."/>
            <person name="Goodwin L."/>
            <person name="Pitluck S."/>
            <person name="Chertkov O."/>
            <person name="Brettin T."/>
            <person name="Detter J.C."/>
            <person name="Han C."/>
            <person name="Larimer F."/>
            <person name="Land M."/>
            <person name="Hauser L."/>
            <person name="Kyrpides N."/>
            <person name="Mikhailova N."/>
            <person name="Coates J.D."/>
        </authorList>
    </citation>
    <scope>NUCLEOTIDE SEQUENCE [LARGE SCALE GENOMIC DNA]</scope>
    <source>
        <strain>TPSY</strain>
    </source>
</reference>
<comment type="function">
    <text evidence="1">Catalyzes the ATP-dependent 2-thiolation of cytidine in position 32 of tRNA, to form 2-thiocytidine (s(2)C32). The sulfur atoms are provided by the cysteine/cysteine desulfurase (IscS) system.</text>
</comment>
<comment type="catalytic activity">
    <reaction evidence="1">
        <text>cytidine(32) in tRNA + S-sulfanyl-L-cysteinyl-[cysteine desulfurase] + AH2 + ATP = 2-thiocytidine(32) in tRNA + L-cysteinyl-[cysteine desulfurase] + A + AMP + diphosphate + H(+)</text>
        <dbReference type="Rhea" id="RHEA:57048"/>
        <dbReference type="Rhea" id="RHEA-COMP:10288"/>
        <dbReference type="Rhea" id="RHEA-COMP:12157"/>
        <dbReference type="Rhea" id="RHEA-COMP:12158"/>
        <dbReference type="Rhea" id="RHEA-COMP:14821"/>
        <dbReference type="ChEBI" id="CHEBI:13193"/>
        <dbReference type="ChEBI" id="CHEBI:15378"/>
        <dbReference type="ChEBI" id="CHEBI:17499"/>
        <dbReference type="ChEBI" id="CHEBI:29950"/>
        <dbReference type="ChEBI" id="CHEBI:30616"/>
        <dbReference type="ChEBI" id="CHEBI:33019"/>
        <dbReference type="ChEBI" id="CHEBI:61963"/>
        <dbReference type="ChEBI" id="CHEBI:82748"/>
        <dbReference type="ChEBI" id="CHEBI:141453"/>
        <dbReference type="ChEBI" id="CHEBI:456215"/>
    </reaction>
    <physiologicalReaction direction="left-to-right" evidence="1">
        <dbReference type="Rhea" id="RHEA:57049"/>
    </physiologicalReaction>
</comment>
<comment type="cofactor">
    <cofactor evidence="1">
        <name>Mg(2+)</name>
        <dbReference type="ChEBI" id="CHEBI:18420"/>
    </cofactor>
</comment>
<comment type="cofactor">
    <cofactor evidence="1">
        <name>[4Fe-4S] cluster</name>
        <dbReference type="ChEBI" id="CHEBI:49883"/>
    </cofactor>
    <text evidence="1">Binds 1 [4Fe-4S] cluster per subunit. The cluster is chelated by three Cys residues, the fourth Fe has a free coordination site that may bind a sulfur atom transferred from the persulfide of IscS.</text>
</comment>
<comment type="pathway">
    <text evidence="1">tRNA modification.</text>
</comment>
<comment type="subunit">
    <text evidence="1">Homodimer.</text>
</comment>
<comment type="subcellular location">
    <subcellularLocation>
        <location evidence="1">Cytoplasm</location>
    </subcellularLocation>
</comment>
<comment type="miscellaneous">
    <text evidence="1">The thiolation reaction likely consists of two steps: a first activation step by ATP to form an adenylated intermediate of the target base of tRNA, and a second nucleophilic substitution step of the sulfur (S) atom supplied by the hydrosulfide attached to the Fe-S cluster.</text>
</comment>
<comment type="similarity">
    <text evidence="1">Belongs to the TtcA family.</text>
</comment>
<proteinExistence type="inferred from homology"/>
<gene>
    <name evidence="1" type="primary">ttcA</name>
    <name type="ordered locus">Dtpsy_0505</name>
</gene>
<feature type="chain" id="PRO_1000188632" description="tRNA-cytidine(32) 2-sulfurtransferase">
    <location>
        <begin position="1"/>
        <end position="317"/>
    </location>
</feature>
<feature type="region of interest" description="Disordered" evidence="2">
    <location>
        <begin position="1"/>
        <end position="29"/>
    </location>
</feature>
<feature type="short sequence motif" description="PP-loop motif" evidence="1">
    <location>
        <begin position="65"/>
        <end position="70"/>
    </location>
</feature>
<feature type="binding site" evidence="1">
    <location>
        <position position="140"/>
    </location>
    <ligand>
        <name>[4Fe-4S] cluster</name>
        <dbReference type="ChEBI" id="CHEBI:49883"/>
    </ligand>
</feature>
<feature type="binding site" evidence="1">
    <location>
        <position position="143"/>
    </location>
    <ligand>
        <name>[4Fe-4S] cluster</name>
        <dbReference type="ChEBI" id="CHEBI:49883"/>
    </ligand>
</feature>
<feature type="binding site" evidence="1">
    <location>
        <position position="231"/>
    </location>
    <ligand>
        <name>[4Fe-4S] cluster</name>
        <dbReference type="ChEBI" id="CHEBI:49883"/>
    </ligand>
</feature>
<sequence>MNTANNTLPTAADWAGEDGAPDAADTRKIERESHKLEKRLCREVGRAITDFNMIEEGDKIMVCMSGGKDSYTLLDILRKLQKRAPVKFDIVAVNLDQKQPGFPEHVLPDYFKSIGVQYHIENQDTYSVVKRVVPEGKTTCSLCSRLRRAILYKVADDLGCTKLALGHHRDDIVATLMLNMFYGGRMKGMPPKLVSDDGKHVVIRPLCYVPEKDTARWAQYQQFPIIPCNLCGSQDGLQRVAVNEMLREWDKKFPGRIESMLRAMGHVVTTHLMDPHLHDFKNAKATGIADPNGDMAFDHEEFPVAPALPGLQVVQLG</sequence>
<evidence type="ECO:0000255" key="1">
    <source>
        <dbReference type="HAMAP-Rule" id="MF_01850"/>
    </source>
</evidence>
<evidence type="ECO:0000256" key="2">
    <source>
        <dbReference type="SAM" id="MobiDB-lite"/>
    </source>
</evidence>
<name>TTCA_ACIET</name>
<keyword id="KW-0004">4Fe-4S</keyword>
<keyword id="KW-0067">ATP-binding</keyword>
<keyword id="KW-0963">Cytoplasm</keyword>
<keyword id="KW-0408">Iron</keyword>
<keyword id="KW-0411">Iron-sulfur</keyword>
<keyword id="KW-0460">Magnesium</keyword>
<keyword id="KW-0479">Metal-binding</keyword>
<keyword id="KW-0547">Nucleotide-binding</keyword>
<keyword id="KW-1185">Reference proteome</keyword>
<keyword id="KW-0694">RNA-binding</keyword>
<keyword id="KW-0808">Transferase</keyword>
<keyword id="KW-0819">tRNA processing</keyword>
<keyword id="KW-0820">tRNA-binding</keyword>
<accession>B9MCI6</accession>
<protein>
    <recommendedName>
        <fullName evidence="1">tRNA-cytidine(32) 2-sulfurtransferase</fullName>
        <ecNumber evidence="1">2.8.1.-</ecNumber>
    </recommendedName>
    <alternativeName>
        <fullName evidence="1">Two-thiocytidine biosynthesis protein A</fullName>
    </alternativeName>
    <alternativeName>
        <fullName evidence="1">tRNA 2-thiocytidine biosynthesis protein TtcA</fullName>
    </alternativeName>
</protein>
<dbReference type="EC" id="2.8.1.-" evidence="1"/>
<dbReference type="EMBL" id="CP001392">
    <property type="protein sequence ID" value="ACM31986.1"/>
    <property type="molecule type" value="Genomic_DNA"/>
</dbReference>
<dbReference type="RefSeq" id="WP_012655537.1">
    <property type="nucleotide sequence ID" value="NC_011992.1"/>
</dbReference>
<dbReference type="SMR" id="B9MCI6"/>
<dbReference type="KEGG" id="dia:Dtpsy_0505"/>
<dbReference type="eggNOG" id="COG0037">
    <property type="taxonomic scope" value="Bacteria"/>
</dbReference>
<dbReference type="HOGENOM" id="CLU_026481_0_0_4"/>
<dbReference type="Proteomes" id="UP000000450">
    <property type="component" value="Chromosome"/>
</dbReference>
<dbReference type="GO" id="GO:0005737">
    <property type="term" value="C:cytoplasm"/>
    <property type="evidence" value="ECO:0007669"/>
    <property type="project" value="UniProtKB-SubCell"/>
</dbReference>
<dbReference type="GO" id="GO:0051539">
    <property type="term" value="F:4 iron, 4 sulfur cluster binding"/>
    <property type="evidence" value="ECO:0007669"/>
    <property type="project" value="UniProtKB-UniRule"/>
</dbReference>
<dbReference type="GO" id="GO:0005524">
    <property type="term" value="F:ATP binding"/>
    <property type="evidence" value="ECO:0007669"/>
    <property type="project" value="UniProtKB-UniRule"/>
</dbReference>
<dbReference type="GO" id="GO:0000287">
    <property type="term" value="F:magnesium ion binding"/>
    <property type="evidence" value="ECO:0007669"/>
    <property type="project" value="UniProtKB-UniRule"/>
</dbReference>
<dbReference type="GO" id="GO:0016783">
    <property type="term" value="F:sulfurtransferase activity"/>
    <property type="evidence" value="ECO:0007669"/>
    <property type="project" value="UniProtKB-UniRule"/>
</dbReference>
<dbReference type="GO" id="GO:0000049">
    <property type="term" value="F:tRNA binding"/>
    <property type="evidence" value="ECO:0007669"/>
    <property type="project" value="UniProtKB-KW"/>
</dbReference>
<dbReference type="GO" id="GO:0034227">
    <property type="term" value="P:tRNA thio-modification"/>
    <property type="evidence" value="ECO:0007669"/>
    <property type="project" value="UniProtKB-UniRule"/>
</dbReference>
<dbReference type="CDD" id="cd24138">
    <property type="entry name" value="TtcA-like"/>
    <property type="match status" value="1"/>
</dbReference>
<dbReference type="Gene3D" id="3.40.50.620">
    <property type="entry name" value="HUPs"/>
    <property type="match status" value="1"/>
</dbReference>
<dbReference type="HAMAP" id="MF_01850">
    <property type="entry name" value="TtcA"/>
    <property type="match status" value="1"/>
</dbReference>
<dbReference type="InterPro" id="IPR014729">
    <property type="entry name" value="Rossmann-like_a/b/a_fold"/>
</dbReference>
<dbReference type="InterPro" id="IPR011063">
    <property type="entry name" value="TilS/TtcA_N"/>
</dbReference>
<dbReference type="InterPro" id="IPR012089">
    <property type="entry name" value="tRNA_Cyd_32_2_STrfase"/>
</dbReference>
<dbReference type="NCBIfam" id="NF007972">
    <property type="entry name" value="PRK10696.1"/>
    <property type="match status" value="1"/>
</dbReference>
<dbReference type="PANTHER" id="PTHR43686:SF1">
    <property type="entry name" value="AMINOTRAN_5 DOMAIN-CONTAINING PROTEIN"/>
    <property type="match status" value="1"/>
</dbReference>
<dbReference type="PANTHER" id="PTHR43686">
    <property type="entry name" value="SULFURTRANSFERASE-RELATED"/>
    <property type="match status" value="1"/>
</dbReference>
<dbReference type="Pfam" id="PF01171">
    <property type="entry name" value="ATP_bind_3"/>
    <property type="match status" value="1"/>
</dbReference>
<dbReference type="SUPFAM" id="SSF52402">
    <property type="entry name" value="Adenine nucleotide alpha hydrolases-like"/>
    <property type="match status" value="1"/>
</dbReference>